<keyword id="KW-0024">Alternative initiation</keyword>
<keyword id="KW-0963">Cytoplasm</keyword>
<keyword id="KW-0206">Cytoskeleton</keyword>
<keyword id="KW-0408">Iron</keyword>
<keyword id="KW-0411">Iron-sulfur</keyword>
<keyword id="KW-0479">Metal-binding</keyword>
<keyword id="KW-0496">Mitochondrion</keyword>
<keyword id="KW-0501">Molybdenum cofactor biosynthesis</keyword>
<keyword id="KW-0539">Nucleus</keyword>
<keyword id="KW-0663">Pyridoxal phosphate</keyword>
<keyword id="KW-1185">Reference proteome</keyword>
<keyword id="KW-0808">Transferase</keyword>
<keyword id="KW-0809">Transit peptide</keyword>
<keyword id="KW-0862">Zinc</keyword>
<evidence type="ECO:0000250" key="1">
    <source>
        <dbReference type="UniProtKB" id="O29689"/>
    </source>
</evidence>
<evidence type="ECO:0000250" key="2">
    <source>
        <dbReference type="UniProtKB" id="Q9H1K1"/>
    </source>
</evidence>
<evidence type="ECO:0000250" key="3">
    <source>
        <dbReference type="UniProtKB" id="Q9Y697"/>
    </source>
</evidence>
<evidence type="ECO:0000250" key="4">
    <source>
        <dbReference type="UniProtKB" id="Q9Z1J3"/>
    </source>
</evidence>
<evidence type="ECO:0000255" key="5"/>
<evidence type="ECO:0000305" key="6"/>
<reference key="1">
    <citation type="submission" date="2004-11" db="EMBL/GenBank/DDBJ databases">
        <authorList>
            <consortium name="The German cDNA consortium"/>
        </authorList>
    </citation>
    <scope>NUCLEOTIDE SEQUENCE [LARGE SCALE MRNA]</scope>
    <source>
        <tissue>Kidney</tissue>
    </source>
</reference>
<protein>
    <recommendedName>
        <fullName evidence="3">Cysteine desulfurase</fullName>
        <ecNumber evidence="3">2.8.1.7</ecNumber>
    </recommendedName>
</protein>
<proteinExistence type="evidence at transcript level"/>
<organism>
    <name type="scientific">Pongo abelii</name>
    <name type="common">Sumatran orangutan</name>
    <name type="synonym">Pongo pygmaeus abelii</name>
    <dbReference type="NCBI Taxonomy" id="9601"/>
    <lineage>
        <taxon>Eukaryota</taxon>
        <taxon>Metazoa</taxon>
        <taxon>Chordata</taxon>
        <taxon>Craniata</taxon>
        <taxon>Vertebrata</taxon>
        <taxon>Euteleostomi</taxon>
        <taxon>Mammalia</taxon>
        <taxon>Eutheria</taxon>
        <taxon>Euarchontoglires</taxon>
        <taxon>Primates</taxon>
        <taxon>Haplorrhini</taxon>
        <taxon>Catarrhini</taxon>
        <taxon>Hominidae</taxon>
        <taxon>Pongo</taxon>
    </lineage>
</organism>
<gene>
    <name evidence="3" type="primary">NFS1</name>
</gene>
<comment type="function">
    <molecule>Isoform Mitochondrial</molecule>
    <text evidence="2 3 4">Cysteine desulfurase, of the core iron-sulfur cluster (ISC) assembly complex, that catalyzes the desulfuration of L-cysteine to L-alanine, as component of the cysteine desulfurase complex leading to the formation of a cysteine persulfide intermediate at the active site cysteine residue and participates in the [2Fe-2S] clusters assembly on the scaffolding protein ISCU. The persulfide is then transferred on the flexible Cys loop from the catalytic site of NFS1 to the surface of NFS1 (By similarity). After the NFS1-linked persulfide sulfur is transferred to one of the conserved Cys residues of the scaffold, a reaction assisted by FXN (By similarity). The core iron-sulfur cluster (ISC) assembly complex is involved in the de novo synthesis of a [2Fe-2S] cluster, the first step of the mitochondrial iron-sulfur protein biogenesis. This process is initiated by the cysteine desulfurase complex (NFS1:LYRM4:NDUFAB1) that produces persulfide which is delivered on the scaffold protein ISCU in a FXN-dependent manner. Then this complex is stabilized by FDX2 which provides reducing equivalents to accomplish the [2Fe-2S] cluster assembly. Finally, the [2Fe-2S] cluster is transferred from ISCU to chaperone proteins, including HSCB, HSPA9 and GLRX5 (By similarity).</text>
</comment>
<comment type="function">
    <molecule>Isoform Cytoplasmic</molecule>
    <text evidence="3">May catalyze the desulfuration of L-cysteine to L-alanine as component of the cysteine desulfurase complex (NFS1:LYRM4), leading to the formation of a cysteine persulfide intermediate. Acts as a sulfur donor for MOCS3 by transferring the sulfur of the cysteine persulfide intermediate on MOCS3.</text>
</comment>
<comment type="catalytic activity">
    <molecule>Isoform Cytoplasmic</molecule>
    <reaction evidence="3">
        <text>(sulfur carrier)-H + L-cysteine = (sulfur carrier)-SH + L-alanine</text>
        <dbReference type="Rhea" id="RHEA:43892"/>
        <dbReference type="Rhea" id="RHEA-COMP:14737"/>
        <dbReference type="Rhea" id="RHEA-COMP:14739"/>
        <dbReference type="ChEBI" id="CHEBI:29917"/>
        <dbReference type="ChEBI" id="CHEBI:35235"/>
        <dbReference type="ChEBI" id="CHEBI:57972"/>
        <dbReference type="ChEBI" id="CHEBI:64428"/>
        <dbReference type="EC" id="2.8.1.7"/>
    </reaction>
</comment>
<comment type="catalytic activity">
    <molecule>Isoform Mitochondrial</molecule>
    <reaction evidence="3">
        <text>(sulfur carrier)-H + L-cysteine = (sulfur carrier)-SH + L-alanine</text>
        <dbReference type="Rhea" id="RHEA:43892"/>
        <dbReference type="Rhea" id="RHEA-COMP:14737"/>
        <dbReference type="Rhea" id="RHEA-COMP:14739"/>
        <dbReference type="ChEBI" id="CHEBI:29917"/>
        <dbReference type="ChEBI" id="CHEBI:35235"/>
        <dbReference type="ChEBI" id="CHEBI:57972"/>
        <dbReference type="ChEBI" id="CHEBI:64428"/>
        <dbReference type="EC" id="2.8.1.7"/>
    </reaction>
</comment>
<comment type="catalytic activity">
    <molecule>Isoform Cytoplasmic</molecule>
    <reaction evidence="3">
        <text>L-cysteinyl-[cysteine desulfurase] + L-cysteine = S-sulfanyl-L-cysteinyl-[cysteine desulfurase] + L-alanine</text>
        <dbReference type="Rhea" id="RHEA:17457"/>
        <dbReference type="Rhea" id="RHEA-COMP:12157"/>
        <dbReference type="Rhea" id="RHEA-COMP:12158"/>
        <dbReference type="ChEBI" id="CHEBI:29950"/>
        <dbReference type="ChEBI" id="CHEBI:35235"/>
        <dbReference type="ChEBI" id="CHEBI:57972"/>
        <dbReference type="ChEBI" id="CHEBI:61963"/>
    </reaction>
</comment>
<comment type="cofactor">
    <cofactor evidence="3">
        <name>pyridoxal 5'-phosphate</name>
        <dbReference type="ChEBI" id="CHEBI:597326"/>
    </cofactor>
</comment>
<comment type="activity regulation">
    <text evidence="3">Active only in complex with LYRM4.</text>
</comment>
<comment type="subunit">
    <molecule>Isoform Mitochondrial</molecule>
    <text evidence="3 4">Homodimer. Component of the mitochondrial core iron-sulfur cluster (ISC) complex composed of NFS1, LYRM4, NDUFAB1, ISCU, FXN, and FDX2; this complex is a heterohexamer containing two copies of each monomer. Component of cyteine desulfurase complex composed of NFS1, LYRM4 and NDUFAB1; this complex contributes to the activation of cysteine desulfurase activity and NFS1 stabilization. Interacts (homodimer form) with ISCU (D-state); each monomer interacts with the C-terminal regions of each NFS1 monomer. Interacts with HSPA9. Interacts (via homodimer form) with FDX2. Interacts (via homodimer form) with FXN. Interacts with LYRM4 (By similarity). Component of a complex composed of FXN, NFS1, LYRM4 and ISCU (By similarity).</text>
</comment>
<comment type="subunit">
    <molecule>Isoform Cytoplasmic</molecule>
    <text evidence="3">Monomer. Homodimer. Oligomer. Interacts with ISCU. Component of the cysteine desulfurase complex composed of NFS1 and LYRM4; this complex contributes to the activation of cysteine desulfurase activity. Interacts with MOCS3.</text>
</comment>
<comment type="subcellular location">
    <molecule>Isoform Mitochondrial</molecule>
    <subcellularLocation>
        <location evidence="3">Mitochondrion</location>
    </subcellularLocation>
</comment>
<comment type="subcellular location">
    <molecule>Isoform Cytoplasmic</molecule>
    <subcellularLocation>
        <location evidence="3">Cytoplasm</location>
    </subcellularLocation>
    <subcellularLocation>
        <location evidence="3">Nucleus</location>
    </subcellularLocation>
    <subcellularLocation>
        <location evidence="3">Cytoplasm</location>
        <location evidence="3">Cytoskeleton</location>
        <location evidence="3">Microtubule organizing center</location>
        <location evidence="3">Centrosome</location>
    </subcellularLocation>
</comment>
<comment type="alternative products">
    <event type="alternative initiation"/>
    <isoform>
        <id>Q5RDE7-1</id>
        <name>Mitochondrial</name>
        <sequence type="displayed"/>
    </isoform>
    <isoform>
        <id>Q5RDE7-2</id>
        <name>Cytoplasmic</name>
        <sequence type="described" ref="VSP_021590"/>
    </isoform>
</comment>
<comment type="PTM">
    <text evidence="4">N-gluconoylated.</text>
</comment>
<comment type="PTM">
    <text evidence="4">Cysteine persulfide intermediate is reduced by thiol-containing molecules like glutathione and L-cysteine. Persulfide reduction is a rate-limiting step of cysteine desulfurase catalytic cycle.</text>
</comment>
<comment type="similarity">
    <text evidence="6">Belongs to the class-V pyridoxal-phosphate-dependent aminotransferase family. NifS/IscS subfamily.</text>
</comment>
<accession>Q5RDE7</accession>
<dbReference type="EC" id="2.8.1.7" evidence="3"/>
<dbReference type="EMBL" id="CR857965">
    <property type="protein sequence ID" value="CAH90210.1"/>
    <property type="molecule type" value="mRNA"/>
</dbReference>
<dbReference type="RefSeq" id="NP_001127252.1">
    <molecule id="Q5RDE7-1"/>
    <property type="nucleotide sequence ID" value="NM_001133780.1"/>
</dbReference>
<dbReference type="SMR" id="Q5RDE7"/>
<dbReference type="FunCoup" id="Q5RDE7">
    <property type="interactions" value="3123"/>
</dbReference>
<dbReference type="STRING" id="9601.ENSPPYP00000012238"/>
<dbReference type="GeneID" id="100174307"/>
<dbReference type="KEGG" id="pon:100174307"/>
<dbReference type="CTD" id="9054"/>
<dbReference type="eggNOG" id="KOG1549">
    <property type="taxonomic scope" value="Eukaryota"/>
</dbReference>
<dbReference type="InParanoid" id="Q5RDE7"/>
<dbReference type="OrthoDB" id="10250117at2759"/>
<dbReference type="Proteomes" id="UP000001595">
    <property type="component" value="Unplaced"/>
</dbReference>
<dbReference type="GO" id="GO:0005813">
    <property type="term" value="C:centrosome"/>
    <property type="evidence" value="ECO:0000250"/>
    <property type="project" value="UniProtKB"/>
</dbReference>
<dbReference type="GO" id="GO:0005829">
    <property type="term" value="C:cytosol"/>
    <property type="evidence" value="ECO:0000250"/>
    <property type="project" value="UniProtKB"/>
</dbReference>
<dbReference type="GO" id="GO:0099128">
    <property type="term" value="C:mitochondrial [2Fe-2S] assembly complex"/>
    <property type="evidence" value="ECO:0000250"/>
    <property type="project" value="UniProtKB"/>
</dbReference>
<dbReference type="GO" id="GO:0005739">
    <property type="term" value="C:mitochondrion"/>
    <property type="evidence" value="ECO:0000250"/>
    <property type="project" value="UniProtKB"/>
</dbReference>
<dbReference type="GO" id="GO:0005634">
    <property type="term" value="C:nucleus"/>
    <property type="evidence" value="ECO:0000250"/>
    <property type="project" value="UniProtKB"/>
</dbReference>
<dbReference type="GO" id="GO:0031071">
    <property type="term" value="F:cysteine desulfurase activity"/>
    <property type="evidence" value="ECO:0000250"/>
    <property type="project" value="UniProtKB"/>
</dbReference>
<dbReference type="GO" id="GO:0051536">
    <property type="term" value="F:iron-sulfur cluster binding"/>
    <property type="evidence" value="ECO:0007669"/>
    <property type="project" value="UniProtKB-KW"/>
</dbReference>
<dbReference type="GO" id="GO:0046872">
    <property type="term" value="F:metal ion binding"/>
    <property type="evidence" value="ECO:0007669"/>
    <property type="project" value="UniProtKB-KW"/>
</dbReference>
<dbReference type="GO" id="GO:0042803">
    <property type="term" value="F:protein homodimerization activity"/>
    <property type="evidence" value="ECO:0000250"/>
    <property type="project" value="UniProtKB"/>
</dbReference>
<dbReference type="GO" id="GO:0030170">
    <property type="term" value="F:pyridoxal phosphate binding"/>
    <property type="evidence" value="ECO:0007669"/>
    <property type="project" value="InterPro"/>
</dbReference>
<dbReference type="GO" id="GO:0044571">
    <property type="term" value="P:[2Fe-2S] cluster assembly"/>
    <property type="evidence" value="ECO:0000250"/>
    <property type="project" value="UniProtKB"/>
</dbReference>
<dbReference type="GO" id="GO:0044572">
    <property type="term" value="P:[4Fe-4S] cluster assembly"/>
    <property type="evidence" value="ECO:0000250"/>
    <property type="project" value="UniProtKB"/>
</dbReference>
<dbReference type="GO" id="GO:0006777">
    <property type="term" value="P:Mo-molybdopterin cofactor biosynthetic process"/>
    <property type="evidence" value="ECO:0007669"/>
    <property type="project" value="UniProtKB-KW"/>
</dbReference>
<dbReference type="FunFam" id="3.40.640.10:FF:000003">
    <property type="entry name" value="Cysteine desulfurase IscS"/>
    <property type="match status" value="1"/>
</dbReference>
<dbReference type="FunFam" id="3.90.1150.10:FF:000002">
    <property type="entry name" value="Cysteine desulfurase IscS"/>
    <property type="match status" value="1"/>
</dbReference>
<dbReference type="Gene3D" id="3.90.1150.10">
    <property type="entry name" value="Aspartate Aminotransferase, domain 1"/>
    <property type="match status" value="1"/>
</dbReference>
<dbReference type="Gene3D" id="3.40.640.10">
    <property type="entry name" value="Type I PLP-dependent aspartate aminotransferase-like (Major domain)"/>
    <property type="match status" value="1"/>
</dbReference>
<dbReference type="HAMAP" id="MF_00331">
    <property type="entry name" value="Cys_desulf_IscS"/>
    <property type="match status" value="1"/>
</dbReference>
<dbReference type="InterPro" id="IPR000192">
    <property type="entry name" value="Aminotrans_V_dom"/>
</dbReference>
<dbReference type="InterPro" id="IPR020578">
    <property type="entry name" value="Aminotrans_V_PyrdxlP_BS"/>
</dbReference>
<dbReference type="InterPro" id="IPR010240">
    <property type="entry name" value="Cys_deSase_IscS"/>
</dbReference>
<dbReference type="InterPro" id="IPR016454">
    <property type="entry name" value="Cysteine_dSase"/>
</dbReference>
<dbReference type="InterPro" id="IPR015424">
    <property type="entry name" value="PyrdxlP-dep_Trfase"/>
</dbReference>
<dbReference type="InterPro" id="IPR015421">
    <property type="entry name" value="PyrdxlP-dep_Trfase_major"/>
</dbReference>
<dbReference type="InterPro" id="IPR015422">
    <property type="entry name" value="PyrdxlP-dep_Trfase_small"/>
</dbReference>
<dbReference type="NCBIfam" id="TIGR02006">
    <property type="entry name" value="IscS"/>
    <property type="match status" value="1"/>
</dbReference>
<dbReference type="NCBIfam" id="NF002806">
    <property type="entry name" value="PRK02948.1"/>
    <property type="match status" value="1"/>
</dbReference>
<dbReference type="NCBIfam" id="NF010611">
    <property type="entry name" value="PRK14012.1"/>
    <property type="match status" value="1"/>
</dbReference>
<dbReference type="PANTHER" id="PTHR11601:SF34">
    <property type="entry name" value="CYSTEINE DESULFURASE"/>
    <property type="match status" value="1"/>
</dbReference>
<dbReference type="PANTHER" id="PTHR11601">
    <property type="entry name" value="CYSTEINE DESULFURYLASE FAMILY MEMBER"/>
    <property type="match status" value="1"/>
</dbReference>
<dbReference type="Pfam" id="PF00266">
    <property type="entry name" value="Aminotran_5"/>
    <property type="match status" value="1"/>
</dbReference>
<dbReference type="PIRSF" id="PIRSF005572">
    <property type="entry name" value="NifS"/>
    <property type="match status" value="1"/>
</dbReference>
<dbReference type="SUPFAM" id="SSF53383">
    <property type="entry name" value="PLP-dependent transferases"/>
    <property type="match status" value="1"/>
</dbReference>
<dbReference type="PROSITE" id="PS00595">
    <property type="entry name" value="AA_TRANSFER_CLASS_5"/>
    <property type="match status" value="1"/>
</dbReference>
<feature type="transit peptide" description="Mitochondrion" evidence="5">
    <location>
        <begin position="1"/>
        <end status="unknown"/>
    </location>
</feature>
<feature type="chain" id="PRO_0000260249" description="Cysteine desulfurase">
    <location>
        <begin status="unknown"/>
        <end position="457"/>
    </location>
</feature>
<feature type="active site" description="Cysteine persulfide intermediate" evidence="4">
    <location>
        <position position="381"/>
    </location>
</feature>
<feature type="binding site" evidence="3">
    <location>
        <position position="127"/>
    </location>
    <ligand>
        <name>pyridoxal 5'-phosphate</name>
        <dbReference type="ChEBI" id="CHEBI:597326"/>
    </ligand>
</feature>
<feature type="binding site" evidence="3">
    <location>
        <position position="128"/>
    </location>
    <ligand>
        <name>pyridoxal 5'-phosphate</name>
        <dbReference type="ChEBI" id="CHEBI:597326"/>
    </ligand>
</feature>
<feature type="binding site" evidence="3">
    <location>
        <position position="235"/>
    </location>
    <ligand>
        <name>pyridoxal 5'-phosphate</name>
        <dbReference type="ChEBI" id="CHEBI:597326"/>
    </ligand>
</feature>
<feature type="binding site" evidence="3">
    <location>
        <position position="255"/>
    </location>
    <ligand>
        <name>pyridoxal 5'-phosphate</name>
        <dbReference type="ChEBI" id="CHEBI:597326"/>
    </ligand>
</feature>
<feature type="binding site" evidence="3">
    <location>
        <position position="257"/>
    </location>
    <ligand>
        <name>pyridoxal 5'-phosphate</name>
        <dbReference type="ChEBI" id="CHEBI:597326"/>
    </ligand>
</feature>
<feature type="binding site" evidence="3">
    <location>
        <position position="295"/>
    </location>
    <ligand>
        <name>pyridoxal 5'-phosphate</name>
        <dbReference type="ChEBI" id="CHEBI:597326"/>
    </ligand>
</feature>
<feature type="binding site" description="via persulfide group" evidence="1">
    <location>
        <position position="381"/>
    </location>
    <ligand>
        <name>[2Fe-2S] cluster</name>
        <dbReference type="ChEBI" id="CHEBI:190135"/>
        <note>ligand shared with ISCU</note>
    </ligand>
</feature>
<feature type="binding site" evidence="3">
    <location>
        <position position="381"/>
    </location>
    <ligand>
        <name>Zn(2+)</name>
        <dbReference type="ChEBI" id="CHEBI:29105"/>
        <note>ligand shared with ISCU (isoform 2)</note>
    </ligand>
</feature>
<feature type="modified residue" description="N6-(pyridoxal phosphate)lysine" evidence="3">
    <location>
        <position position="258"/>
    </location>
</feature>
<feature type="modified residue" description="Cysteine persulfide" evidence="4">
    <location>
        <position position="381"/>
    </location>
</feature>
<feature type="splice variant" id="VSP_021590" description="In isoform Cytoplasmic." evidence="6">
    <location>
        <begin position="1"/>
        <end position="60"/>
    </location>
</feature>
<name>NFS1_PONAB</name>
<sequence length="457" mass="50135">MLLRAAWRRAAVAVTAAPGPKPAAPTRGLRLRVGDHAPQSAVPADTAAAPEAGPVLRPLYMDVQATTPLDPRVLDAMLPYLINYYGNPHSRTHAYGWESEAAMERARQQVASLIGADPREIIFTSGATESNNIAIKGVARFYRSRKKHLITTQTEHKCVLDSCRSLEAEGFQVTYLPVQKSGIIDLKELEAAIQPDTSLVSVMTVNNEIGVKQPIAEIGRICSSRKVYFHTDAAQAVGKIPLDVNDMKIDLMSISGHKIYGPKGVGAIYIRRRPRVRVEALQSGGGQERGMRSGTVPTPLVVGLGAACEVAQQEMEYDHKRISKLSERLIQNIMKSLPDVVMNGDPEHHYPGCINLSFAYVEGESLLMALKDVALSSGSACTSASLEPSYVLRAIGTDEDLAHSSIRFGVGRFTTEEEVDYTVEKCIQHVKRLREMSPLWEMVQDGIDLKSIKWTQH</sequence>